<reference key="1">
    <citation type="submission" date="2007-06" db="EMBL/GenBank/DDBJ databases">
        <authorList>
            <person name="Dodson R.J."/>
            <person name="Harkins D."/>
            <person name="Paulsen I.T."/>
        </authorList>
    </citation>
    <scope>NUCLEOTIDE SEQUENCE [LARGE SCALE GENOMIC DNA]</scope>
    <source>
        <strain>DSM 24068 / PA7</strain>
    </source>
</reference>
<feature type="chain" id="PRO_1000007874" description="4-diphosphocytidyl-2-C-methyl-D-erythritol kinase">
    <location>
        <begin position="1"/>
        <end position="282"/>
    </location>
</feature>
<feature type="active site" evidence="1">
    <location>
        <position position="12"/>
    </location>
</feature>
<feature type="active site" evidence="1">
    <location>
        <position position="137"/>
    </location>
</feature>
<feature type="binding site" evidence="1">
    <location>
        <begin position="95"/>
        <end position="105"/>
    </location>
    <ligand>
        <name>ATP</name>
        <dbReference type="ChEBI" id="CHEBI:30616"/>
    </ligand>
</feature>
<protein>
    <recommendedName>
        <fullName evidence="1">4-diphosphocytidyl-2-C-methyl-D-erythritol kinase</fullName>
        <shortName evidence="1">CMK</shortName>
        <ecNumber evidence="1">2.7.1.148</ecNumber>
    </recommendedName>
    <alternativeName>
        <fullName evidence="1">4-(cytidine-5'-diphospho)-2-C-methyl-D-erythritol kinase</fullName>
    </alternativeName>
</protein>
<dbReference type="EC" id="2.7.1.148" evidence="1"/>
<dbReference type="EMBL" id="CP000744">
    <property type="protein sequence ID" value="ABR81318.1"/>
    <property type="molecule type" value="Genomic_DNA"/>
</dbReference>
<dbReference type="RefSeq" id="WP_012077390.1">
    <property type="nucleotide sequence ID" value="NC_009656.1"/>
</dbReference>
<dbReference type="SMR" id="A6VC65"/>
<dbReference type="KEGG" id="pap:PSPA7_5318"/>
<dbReference type="HOGENOM" id="CLU_053057_3_0_6"/>
<dbReference type="UniPathway" id="UPA00056">
    <property type="reaction ID" value="UER00094"/>
</dbReference>
<dbReference type="Proteomes" id="UP000001582">
    <property type="component" value="Chromosome"/>
</dbReference>
<dbReference type="GO" id="GO:0050515">
    <property type="term" value="F:4-(cytidine 5'-diphospho)-2-C-methyl-D-erythritol kinase activity"/>
    <property type="evidence" value="ECO:0007669"/>
    <property type="project" value="UniProtKB-UniRule"/>
</dbReference>
<dbReference type="GO" id="GO:0005524">
    <property type="term" value="F:ATP binding"/>
    <property type="evidence" value="ECO:0007669"/>
    <property type="project" value="UniProtKB-UniRule"/>
</dbReference>
<dbReference type="GO" id="GO:0019288">
    <property type="term" value="P:isopentenyl diphosphate biosynthetic process, methylerythritol 4-phosphate pathway"/>
    <property type="evidence" value="ECO:0007669"/>
    <property type="project" value="UniProtKB-UniRule"/>
</dbReference>
<dbReference type="GO" id="GO:0016114">
    <property type="term" value="P:terpenoid biosynthetic process"/>
    <property type="evidence" value="ECO:0007669"/>
    <property type="project" value="InterPro"/>
</dbReference>
<dbReference type="FunFam" id="3.30.230.10:FF:000022">
    <property type="entry name" value="4-diphosphocytidyl-2-C-methyl-D-erythritol kinase"/>
    <property type="match status" value="1"/>
</dbReference>
<dbReference type="Gene3D" id="3.30.230.10">
    <property type="match status" value="1"/>
</dbReference>
<dbReference type="Gene3D" id="3.30.70.890">
    <property type="entry name" value="GHMP kinase, C-terminal domain"/>
    <property type="match status" value="1"/>
</dbReference>
<dbReference type="HAMAP" id="MF_00061">
    <property type="entry name" value="IspE"/>
    <property type="match status" value="1"/>
</dbReference>
<dbReference type="InterPro" id="IPR013750">
    <property type="entry name" value="GHMP_kinase_C_dom"/>
</dbReference>
<dbReference type="InterPro" id="IPR036554">
    <property type="entry name" value="GHMP_kinase_C_sf"/>
</dbReference>
<dbReference type="InterPro" id="IPR006204">
    <property type="entry name" value="GHMP_kinase_N_dom"/>
</dbReference>
<dbReference type="InterPro" id="IPR004424">
    <property type="entry name" value="IspE"/>
</dbReference>
<dbReference type="InterPro" id="IPR020568">
    <property type="entry name" value="Ribosomal_Su5_D2-typ_SF"/>
</dbReference>
<dbReference type="InterPro" id="IPR014721">
    <property type="entry name" value="Ribsml_uS5_D2-typ_fold_subgr"/>
</dbReference>
<dbReference type="NCBIfam" id="TIGR00154">
    <property type="entry name" value="ispE"/>
    <property type="match status" value="1"/>
</dbReference>
<dbReference type="PANTHER" id="PTHR43527">
    <property type="entry name" value="4-DIPHOSPHOCYTIDYL-2-C-METHYL-D-ERYTHRITOL KINASE, CHLOROPLASTIC"/>
    <property type="match status" value="1"/>
</dbReference>
<dbReference type="PANTHER" id="PTHR43527:SF2">
    <property type="entry name" value="4-DIPHOSPHOCYTIDYL-2-C-METHYL-D-ERYTHRITOL KINASE, CHLOROPLASTIC"/>
    <property type="match status" value="1"/>
</dbReference>
<dbReference type="Pfam" id="PF08544">
    <property type="entry name" value="GHMP_kinases_C"/>
    <property type="match status" value="1"/>
</dbReference>
<dbReference type="Pfam" id="PF00288">
    <property type="entry name" value="GHMP_kinases_N"/>
    <property type="match status" value="1"/>
</dbReference>
<dbReference type="PIRSF" id="PIRSF010376">
    <property type="entry name" value="IspE"/>
    <property type="match status" value="1"/>
</dbReference>
<dbReference type="SUPFAM" id="SSF55060">
    <property type="entry name" value="GHMP Kinase, C-terminal domain"/>
    <property type="match status" value="1"/>
</dbReference>
<dbReference type="SUPFAM" id="SSF54211">
    <property type="entry name" value="Ribosomal protein S5 domain 2-like"/>
    <property type="match status" value="1"/>
</dbReference>
<comment type="function">
    <text evidence="1">Catalyzes the phosphorylation of the position 2 hydroxy group of 4-diphosphocytidyl-2C-methyl-D-erythritol.</text>
</comment>
<comment type="catalytic activity">
    <reaction evidence="1">
        <text>4-CDP-2-C-methyl-D-erythritol + ATP = 4-CDP-2-C-methyl-D-erythritol 2-phosphate + ADP + H(+)</text>
        <dbReference type="Rhea" id="RHEA:18437"/>
        <dbReference type="ChEBI" id="CHEBI:15378"/>
        <dbReference type="ChEBI" id="CHEBI:30616"/>
        <dbReference type="ChEBI" id="CHEBI:57823"/>
        <dbReference type="ChEBI" id="CHEBI:57919"/>
        <dbReference type="ChEBI" id="CHEBI:456216"/>
        <dbReference type="EC" id="2.7.1.148"/>
    </reaction>
</comment>
<comment type="pathway">
    <text evidence="1">Isoprenoid biosynthesis; isopentenyl diphosphate biosynthesis via DXP pathway; isopentenyl diphosphate from 1-deoxy-D-xylulose 5-phosphate: step 3/6.</text>
</comment>
<comment type="similarity">
    <text evidence="1">Belongs to the GHMP kinase family. IspE subfamily.</text>
</comment>
<sequence length="282" mass="30802">MAVRLSLPAPAKLNLFLHILGRRADGYHELQTLFQFLDHGDELHFETREDGQVRLHTEIAGVPHDGNLIVRAARVLQEASGSTQGVDIWLDKRLPMGGGIGGGSSDAATTLLALNHLWNLGWDEDRIAALGLRLGADVPVFTRGRAAFAEGVGEKLTPVDIPEPWYLVVVPQVLVSTAEIFSDPLLTRDSPAIKVRTVLEGDSRNDCQPVVERRYPEVRNALILLNKFVSARLTGTGGCVFGSFPNKAEADKVSALLPDHLQRFVAKGSNVSMLHRKLETLV</sequence>
<evidence type="ECO:0000255" key="1">
    <source>
        <dbReference type="HAMAP-Rule" id="MF_00061"/>
    </source>
</evidence>
<organism>
    <name type="scientific">Pseudomonas paraeruginosa (strain DSM 24068 / PA7)</name>
    <name type="common">Pseudomonas aeruginosa (strain PA7)</name>
    <dbReference type="NCBI Taxonomy" id="381754"/>
    <lineage>
        <taxon>Bacteria</taxon>
        <taxon>Pseudomonadati</taxon>
        <taxon>Pseudomonadota</taxon>
        <taxon>Gammaproteobacteria</taxon>
        <taxon>Pseudomonadales</taxon>
        <taxon>Pseudomonadaceae</taxon>
        <taxon>Pseudomonas</taxon>
        <taxon>Pseudomonas paraeruginosa</taxon>
    </lineage>
</organism>
<gene>
    <name evidence="1" type="primary">ispE</name>
    <name type="ordered locus">PSPA7_5318</name>
</gene>
<name>ISPE_PSEP7</name>
<proteinExistence type="inferred from homology"/>
<keyword id="KW-0067">ATP-binding</keyword>
<keyword id="KW-0414">Isoprene biosynthesis</keyword>
<keyword id="KW-0418">Kinase</keyword>
<keyword id="KW-0547">Nucleotide-binding</keyword>
<keyword id="KW-0808">Transferase</keyword>
<accession>A6VC65</accession>